<evidence type="ECO:0000255" key="1">
    <source>
        <dbReference type="PROSITE-ProRule" id="PRU00333"/>
    </source>
</evidence>
<evidence type="ECO:0000269" key="2">
    <source>
    </source>
</evidence>
<accession>A4ZGQ8</accession>
<sequence>MGLEKKSALLEDLIEKCGGCAVVDGGFATQLEIHGAAINDPLWSAVSLIKDPELIKRVHMEYLEAGADVVVTSSYQATIPGFLSRGLSMEESESLLQKSVKLAVEARDRFWDKVSKTSGHSYNRALVAASIGSYGAYLADGSEYSGSYGEDVSLDKLKDFHRRRIQVLVEASPDLLAFETIPNKLEAQACVELLEEENVQIPAWICFTSVDGENAPSGESFQECLETLNKSNNICAVGINCAPPQFMDNLIRKFSKLTQKAIVVYPNSGEVWDGKAKKWLPSQCFGDAEFEMFATKWRDLGAKLIGGCCRTTPSTIKAISRDLKRR</sequence>
<reference key="1">
    <citation type="journal article" date="2007" name="Phytochemistry">
        <title>Biochemical and molecular characterization of the homocysteine S-methyltransferase from broccoli (Brassica oleracea var. italica).</title>
        <authorList>
            <person name="Lyi S.M."/>
            <person name="Zhou X."/>
            <person name="Kochian L.V."/>
            <person name="Li L."/>
        </authorList>
    </citation>
    <scope>NUCLEOTIDE SEQUENCE [MRNA]</scope>
    <scope>FUNCTION</scope>
    <scope>CATALYTIC ACTIVITY</scope>
    <scope>BIOPHYSICOCHEMICAL PROPERTIES</scope>
    <scope>ACTIVITY REGULATION</scope>
    <scope>TISSUE SPECIFICITY</scope>
    <scope>INDUCTION BY SELENATE</scope>
    <source>
        <strain>cv. Green comet</strain>
    </source>
</reference>
<comment type="function">
    <text evidence="2">Catalyzes methyl transfer from S-methylmethionine to homocysteine. The highest preference is for DL-homocysteine &gt;&gt; DL-cysteine. Has no selenocysteine methyltransferase activity.</text>
</comment>
<comment type="catalytic activity">
    <reaction evidence="2">
        <text>S-methyl-L-methionine + L-homocysteine = 2 L-methionine + H(+)</text>
        <dbReference type="Rhea" id="RHEA:26337"/>
        <dbReference type="ChEBI" id="CHEBI:15378"/>
        <dbReference type="ChEBI" id="CHEBI:57844"/>
        <dbReference type="ChEBI" id="CHEBI:58199"/>
        <dbReference type="ChEBI" id="CHEBI:58252"/>
        <dbReference type="EC" id="2.1.1.10"/>
    </reaction>
</comment>
<comment type="cofactor">
    <cofactor evidence="1">
        <name>Zn(2+)</name>
        <dbReference type="ChEBI" id="CHEBI:29105"/>
    </cofactor>
</comment>
<comment type="activity regulation">
    <text evidence="2">Inhibited by L-methionine.</text>
</comment>
<comment type="biophysicochemical properties">
    <kinetics>
        <KM evidence="2">72 uM for DL-homocysteine</KM>
    </kinetics>
    <phDependence>
        <text evidence="2">Optimum pH is 7.2.</text>
    </phDependence>
</comment>
<comment type="tissue specificity">
    <text evidence="2">Expressed in roots, young leaves, florets and flowers. Not detected in old leaves.</text>
</comment>
<comment type="induction">
    <text evidence="2">Not induced by selenate or selenite. Up-regulated by sulfate. Not affected by the status of methionine, s-methylmethionine or homocysteine, or by cadmium.</text>
</comment>
<proteinExistence type="evidence at protein level"/>
<gene>
    <name type="primary">HMT1</name>
</gene>
<keyword id="KW-0479">Metal-binding</keyword>
<keyword id="KW-0489">Methyltransferase</keyword>
<keyword id="KW-0808">Transferase</keyword>
<keyword id="KW-0862">Zinc</keyword>
<organism>
    <name type="scientific">Brassica oleracea var. italica</name>
    <name type="common">Broccoli</name>
    <dbReference type="NCBI Taxonomy" id="36774"/>
    <lineage>
        <taxon>Eukaryota</taxon>
        <taxon>Viridiplantae</taxon>
        <taxon>Streptophyta</taxon>
        <taxon>Embryophyta</taxon>
        <taxon>Tracheophyta</taxon>
        <taxon>Spermatophyta</taxon>
        <taxon>Magnoliopsida</taxon>
        <taxon>eudicotyledons</taxon>
        <taxon>Gunneridae</taxon>
        <taxon>Pentapetalae</taxon>
        <taxon>rosids</taxon>
        <taxon>malvids</taxon>
        <taxon>Brassicales</taxon>
        <taxon>Brassicaceae</taxon>
        <taxon>Brassiceae</taxon>
        <taxon>Brassica</taxon>
    </lineage>
</organism>
<feature type="chain" id="PRO_0000409376" description="Homocysteine S-methyltransferase 1">
    <location>
        <begin position="1"/>
        <end position="326"/>
    </location>
</feature>
<feature type="domain" description="Hcy-binding" evidence="1">
    <location>
        <begin position="9"/>
        <end position="323"/>
    </location>
</feature>
<feature type="binding site" evidence="1">
    <location>
        <position position="241"/>
    </location>
    <ligand>
        <name>Zn(2+)</name>
        <dbReference type="ChEBI" id="CHEBI:29105"/>
    </ligand>
</feature>
<feature type="binding site" evidence="1">
    <location>
        <position position="308"/>
    </location>
    <ligand>
        <name>Zn(2+)</name>
        <dbReference type="ChEBI" id="CHEBI:29105"/>
    </ligand>
</feature>
<feature type="binding site" evidence="1">
    <location>
        <position position="309"/>
    </location>
    <ligand>
        <name>Zn(2+)</name>
        <dbReference type="ChEBI" id="CHEBI:29105"/>
    </ligand>
</feature>
<dbReference type="EC" id="2.1.1.10"/>
<dbReference type="EMBL" id="DQ679980">
    <property type="protein sequence ID" value="ABG74913.1"/>
    <property type="molecule type" value="mRNA"/>
</dbReference>
<dbReference type="SMR" id="A4ZGQ8"/>
<dbReference type="BioCyc" id="MetaCyc:MONOMER-15250"/>
<dbReference type="GO" id="GO:0008898">
    <property type="term" value="F:S-adenosylmethionine-homocysteine S-methyltransferase activity"/>
    <property type="evidence" value="ECO:0000314"/>
    <property type="project" value="UniProtKB"/>
</dbReference>
<dbReference type="GO" id="GO:0061627">
    <property type="term" value="F:S-methylmethionine-homocysteine S-methyltransferase activity"/>
    <property type="evidence" value="ECO:0007669"/>
    <property type="project" value="RHEA"/>
</dbReference>
<dbReference type="GO" id="GO:0008270">
    <property type="term" value="F:zinc ion binding"/>
    <property type="evidence" value="ECO:0007669"/>
    <property type="project" value="InterPro"/>
</dbReference>
<dbReference type="GO" id="GO:0009086">
    <property type="term" value="P:methionine biosynthetic process"/>
    <property type="evidence" value="ECO:0007669"/>
    <property type="project" value="InterPro"/>
</dbReference>
<dbReference type="GO" id="GO:0032259">
    <property type="term" value="P:methylation"/>
    <property type="evidence" value="ECO:0000314"/>
    <property type="project" value="UniProtKB"/>
</dbReference>
<dbReference type="GO" id="GO:0033528">
    <property type="term" value="P:S-methylmethionine cycle"/>
    <property type="evidence" value="ECO:0007669"/>
    <property type="project" value="TreeGrafter"/>
</dbReference>
<dbReference type="FunFam" id="3.20.20.330:FF:000002">
    <property type="entry name" value="Homocysteine S-methyltransferase"/>
    <property type="match status" value="1"/>
</dbReference>
<dbReference type="Gene3D" id="3.20.20.330">
    <property type="entry name" value="Homocysteine-binding-like domain"/>
    <property type="match status" value="1"/>
</dbReference>
<dbReference type="InterPro" id="IPR017226">
    <property type="entry name" value="Betaine-hCys_S-MeTrfase_BHMT"/>
</dbReference>
<dbReference type="InterPro" id="IPR003726">
    <property type="entry name" value="HCY_dom"/>
</dbReference>
<dbReference type="InterPro" id="IPR036589">
    <property type="entry name" value="HCY_dom_sf"/>
</dbReference>
<dbReference type="InterPro" id="IPR051486">
    <property type="entry name" value="Hcy_S-methyltransferase"/>
</dbReference>
<dbReference type="NCBIfam" id="NF007020">
    <property type="entry name" value="PRK09485.1"/>
    <property type="match status" value="1"/>
</dbReference>
<dbReference type="PANTHER" id="PTHR46015:SF7">
    <property type="entry name" value="HOMOCYSTEINE S-METHYLTRANSFERASE 1"/>
    <property type="match status" value="1"/>
</dbReference>
<dbReference type="PANTHER" id="PTHR46015">
    <property type="entry name" value="ZGC:172121"/>
    <property type="match status" value="1"/>
</dbReference>
<dbReference type="Pfam" id="PF02574">
    <property type="entry name" value="S-methyl_trans"/>
    <property type="match status" value="1"/>
</dbReference>
<dbReference type="PIRSF" id="PIRSF037505">
    <property type="entry name" value="Betaine_HMT"/>
    <property type="match status" value="1"/>
</dbReference>
<dbReference type="SUPFAM" id="SSF82282">
    <property type="entry name" value="Homocysteine S-methyltransferase"/>
    <property type="match status" value="1"/>
</dbReference>
<dbReference type="PROSITE" id="PS50970">
    <property type="entry name" value="HCY"/>
    <property type="match status" value="1"/>
</dbReference>
<name>HMT1_BRAOT</name>
<protein>
    <recommendedName>
        <fullName>Homocysteine S-methyltransferase 1</fullName>
        <shortName>BoHMT1</shortName>
        <ecNumber>2.1.1.10</ecNumber>
    </recommendedName>
</protein>